<accession>Q6GNJ8</accession>
<evidence type="ECO:0000250" key="1"/>
<evidence type="ECO:0000250" key="2">
    <source>
        <dbReference type="UniProtKB" id="Q15906"/>
    </source>
</evidence>
<evidence type="ECO:0000255" key="3"/>
<evidence type="ECO:0000256" key="4">
    <source>
        <dbReference type="SAM" id="MobiDB-lite"/>
    </source>
</evidence>
<evidence type="ECO:0000305" key="5"/>
<reference key="1">
    <citation type="submission" date="2004-06" db="EMBL/GenBank/DDBJ databases">
        <authorList>
            <consortium name="NIH - Xenopus Gene Collection (XGC) project"/>
        </authorList>
    </citation>
    <scope>NUCLEOTIDE SEQUENCE [LARGE SCALE MRNA]</scope>
    <source>
        <tissue>Embryo</tissue>
    </source>
</reference>
<feature type="chain" id="PRO_0000239005" description="Vacuolar protein sorting-associated protein 72 homolog">
    <location>
        <begin position="1"/>
        <end position="353"/>
    </location>
</feature>
<feature type="DNA-binding region" evidence="3">
    <location>
        <begin position="155"/>
        <end position="205"/>
    </location>
</feature>
<feature type="region of interest" description="Disordered" evidence="4">
    <location>
        <begin position="1"/>
        <end position="143"/>
    </location>
</feature>
<feature type="compositionally biased region" description="Acidic residues" evidence="4">
    <location>
        <begin position="54"/>
        <end position="69"/>
    </location>
</feature>
<feature type="compositionally biased region" description="Basic and acidic residues" evidence="4">
    <location>
        <begin position="70"/>
        <end position="79"/>
    </location>
</feature>
<feature type="compositionally biased region" description="Basic and acidic residues" evidence="4">
    <location>
        <begin position="113"/>
        <end position="143"/>
    </location>
</feature>
<keyword id="KW-0156">Chromatin regulator</keyword>
<keyword id="KW-0238">DNA-binding</keyword>
<keyword id="KW-0539">Nucleus</keyword>
<keyword id="KW-1185">Reference proteome</keyword>
<keyword id="KW-0804">Transcription</keyword>
<keyword id="KW-0805">Transcription regulation</keyword>
<sequence>MNLADGRAPRKTAGNRMSGLLQAEEEDDFYKTTYGGFNEESGDEEYNEDRSASEDEVDSDFDIDEGDEPTSDHEEDEPKKKRRVVTKAYKEPIQLLKPKPKKPEAPPNTAAKSRPEKPQEPPDDTVDSRKQMRQSTTEHTRQTFLRVKERQIQSKKKKGPHLDRPLTQEELLEEAKITEEINIRSLENYERLEADRKKQVHKKRRCAGPTIRYHSMVMPLITELRMKEENVDVEGLDHEQTDRTHAGKCSRSFITFSDDETFERFFPRSKRGKFSVRDVCPVTHKPALYRDPITDIPYYNSKAFKIIRDAYKKYITTHGLPNAAMATTMGPSADAAQRNTRQKIIIKQSVPSA</sequence>
<protein>
    <recommendedName>
        <fullName>Vacuolar protein sorting-associated protein 72 homolog</fullName>
    </recommendedName>
    <alternativeName>
        <fullName>Transcription factor-like 1</fullName>
    </alternativeName>
</protein>
<name>VPS72_XENLA</name>
<dbReference type="EMBL" id="BC073511">
    <property type="protein sequence ID" value="AAH73511.1"/>
    <property type="molecule type" value="mRNA"/>
</dbReference>
<dbReference type="RefSeq" id="NP_001085907.1">
    <property type="nucleotide sequence ID" value="NM_001092438.1"/>
</dbReference>
<dbReference type="SMR" id="Q6GNJ8"/>
<dbReference type="BioGRID" id="102497">
    <property type="interactions" value="1"/>
</dbReference>
<dbReference type="DNASU" id="444334"/>
<dbReference type="GeneID" id="444334"/>
<dbReference type="KEGG" id="xla:444334"/>
<dbReference type="AGR" id="Xenbase:XB-GENE-17339794"/>
<dbReference type="CTD" id="444334"/>
<dbReference type="Xenbase" id="XB-GENE-17339794">
    <property type="gene designation" value="vps72.L"/>
</dbReference>
<dbReference type="OrthoDB" id="78296at2759"/>
<dbReference type="Proteomes" id="UP000186698">
    <property type="component" value="Chromosome 8L"/>
</dbReference>
<dbReference type="Bgee" id="444334">
    <property type="expression patterns" value="Expressed in egg cell and 19 other cell types or tissues"/>
</dbReference>
<dbReference type="GO" id="GO:0005634">
    <property type="term" value="C:nucleus"/>
    <property type="evidence" value="ECO:0000318"/>
    <property type="project" value="GO_Central"/>
</dbReference>
<dbReference type="GO" id="GO:0003677">
    <property type="term" value="F:DNA binding"/>
    <property type="evidence" value="ECO:0007669"/>
    <property type="project" value="UniProtKB-KW"/>
</dbReference>
<dbReference type="GO" id="GO:0140713">
    <property type="term" value="F:histone chaperone activity"/>
    <property type="evidence" value="ECO:0000250"/>
    <property type="project" value="UniProtKB"/>
</dbReference>
<dbReference type="GO" id="GO:0045815">
    <property type="term" value="P:transcription initiation-coupled chromatin remodeling"/>
    <property type="evidence" value="ECO:0000250"/>
    <property type="project" value="UniProtKB"/>
</dbReference>
<dbReference type="InterPro" id="IPR013272">
    <property type="entry name" value="Vps72/YL1_C"/>
</dbReference>
<dbReference type="InterPro" id="IPR046757">
    <property type="entry name" value="YL1_N"/>
</dbReference>
<dbReference type="PANTHER" id="PTHR13275:SF4">
    <property type="entry name" value="VACUOLAR PROTEIN SORTING-ASSOCIATED PROTEIN 72 HOMOLOG"/>
    <property type="match status" value="1"/>
</dbReference>
<dbReference type="PANTHER" id="PTHR13275">
    <property type="entry name" value="YL-1 PROTEIN TRANSCRIPTION FACTOR-LIKE 1"/>
    <property type="match status" value="1"/>
</dbReference>
<dbReference type="Pfam" id="PF05764">
    <property type="entry name" value="YL1"/>
    <property type="match status" value="1"/>
</dbReference>
<dbReference type="Pfam" id="PF08265">
    <property type="entry name" value="YL1_C"/>
    <property type="match status" value="1"/>
</dbReference>
<dbReference type="SMART" id="SM00993">
    <property type="entry name" value="YL1_C"/>
    <property type="match status" value="1"/>
</dbReference>
<proteinExistence type="evidence at transcript level"/>
<comment type="function">
    <text evidence="2">Deposition-and-exchange histone chaperone specific for H2AZ1, specifically chaperones H2AZ1 and deposits it into nucleosomes. As component of the SRCAP complex, mediates the ATP-dependent exchange of histone H2AZ1/H2B dimers for nucleosomal H2A/H2B, leading to transcriptional regulation of selected genes by chromatin remodeling.</text>
</comment>
<comment type="subunit">
    <text evidence="1">Component of the NuA4 histone acetyltransferase complex.</text>
</comment>
<comment type="subcellular location">
    <subcellularLocation>
        <location evidence="1">Nucleus</location>
    </subcellularLocation>
</comment>
<comment type="similarity">
    <text evidence="5">Belongs to the VPS72/YL1 family.</text>
</comment>
<gene>
    <name type="primary">vps72</name>
</gene>
<organism>
    <name type="scientific">Xenopus laevis</name>
    <name type="common">African clawed frog</name>
    <dbReference type="NCBI Taxonomy" id="8355"/>
    <lineage>
        <taxon>Eukaryota</taxon>
        <taxon>Metazoa</taxon>
        <taxon>Chordata</taxon>
        <taxon>Craniata</taxon>
        <taxon>Vertebrata</taxon>
        <taxon>Euteleostomi</taxon>
        <taxon>Amphibia</taxon>
        <taxon>Batrachia</taxon>
        <taxon>Anura</taxon>
        <taxon>Pipoidea</taxon>
        <taxon>Pipidae</taxon>
        <taxon>Xenopodinae</taxon>
        <taxon>Xenopus</taxon>
        <taxon>Xenopus</taxon>
    </lineage>
</organism>